<dbReference type="EC" id="2.5.1.3" evidence="1"/>
<dbReference type="EMBL" id="AP009351">
    <property type="protein sequence ID" value="BAF68267.1"/>
    <property type="molecule type" value="Genomic_DNA"/>
</dbReference>
<dbReference type="RefSeq" id="WP_000483153.1">
    <property type="nucleotide sequence ID" value="NZ_JBBIAE010000008.1"/>
</dbReference>
<dbReference type="SMR" id="A6QIT5"/>
<dbReference type="KEGG" id="sae:NWMN_1995"/>
<dbReference type="HOGENOM" id="CLU_018272_3_2_9"/>
<dbReference type="UniPathway" id="UPA00060">
    <property type="reaction ID" value="UER00141"/>
</dbReference>
<dbReference type="Proteomes" id="UP000006386">
    <property type="component" value="Chromosome"/>
</dbReference>
<dbReference type="GO" id="GO:0005737">
    <property type="term" value="C:cytoplasm"/>
    <property type="evidence" value="ECO:0007669"/>
    <property type="project" value="TreeGrafter"/>
</dbReference>
<dbReference type="GO" id="GO:0000287">
    <property type="term" value="F:magnesium ion binding"/>
    <property type="evidence" value="ECO:0007669"/>
    <property type="project" value="UniProtKB-UniRule"/>
</dbReference>
<dbReference type="GO" id="GO:0004789">
    <property type="term" value="F:thiamine-phosphate diphosphorylase activity"/>
    <property type="evidence" value="ECO:0007669"/>
    <property type="project" value="UniProtKB-UniRule"/>
</dbReference>
<dbReference type="GO" id="GO:0009228">
    <property type="term" value="P:thiamine biosynthetic process"/>
    <property type="evidence" value="ECO:0007669"/>
    <property type="project" value="UniProtKB-KW"/>
</dbReference>
<dbReference type="GO" id="GO:0009229">
    <property type="term" value="P:thiamine diphosphate biosynthetic process"/>
    <property type="evidence" value="ECO:0007669"/>
    <property type="project" value="UniProtKB-UniRule"/>
</dbReference>
<dbReference type="CDD" id="cd00564">
    <property type="entry name" value="TMP_TenI"/>
    <property type="match status" value="1"/>
</dbReference>
<dbReference type="FunFam" id="3.20.20.70:FF:000096">
    <property type="entry name" value="Thiamine-phosphate synthase"/>
    <property type="match status" value="1"/>
</dbReference>
<dbReference type="Gene3D" id="3.20.20.70">
    <property type="entry name" value="Aldolase class I"/>
    <property type="match status" value="1"/>
</dbReference>
<dbReference type="HAMAP" id="MF_00097">
    <property type="entry name" value="TMP_synthase"/>
    <property type="match status" value="1"/>
</dbReference>
<dbReference type="InterPro" id="IPR013785">
    <property type="entry name" value="Aldolase_TIM"/>
</dbReference>
<dbReference type="InterPro" id="IPR036206">
    <property type="entry name" value="ThiamineP_synth_sf"/>
</dbReference>
<dbReference type="InterPro" id="IPR022998">
    <property type="entry name" value="ThiamineP_synth_TenI"/>
</dbReference>
<dbReference type="InterPro" id="IPR034291">
    <property type="entry name" value="TMP_synthase"/>
</dbReference>
<dbReference type="NCBIfam" id="TIGR00693">
    <property type="entry name" value="thiE"/>
    <property type="match status" value="1"/>
</dbReference>
<dbReference type="PANTHER" id="PTHR20857">
    <property type="entry name" value="THIAMINE-PHOSPHATE PYROPHOSPHORYLASE"/>
    <property type="match status" value="1"/>
</dbReference>
<dbReference type="PANTHER" id="PTHR20857:SF15">
    <property type="entry name" value="THIAMINE-PHOSPHATE SYNTHASE"/>
    <property type="match status" value="1"/>
</dbReference>
<dbReference type="Pfam" id="PF02581">
    <property type="entry name" value="TMP-TENI"/>
    <property type="match status" value="1"/>
</dbReference>
<dbReference type="SUPFAM" id="SSF51391">
    <property type="entry name" value="Thiamin phosphate synthase"/>
    <property type="match status" value="1"/>
</dbReference>
<comment type="function">
    <text evidence="1">Condenses 4-methyl-5-(beta-hydroxyethyl)thiazole monophosphate (THZ-P) and 2-methyl-4-amino-5-hydroxymethyl pyrimidine pyrophosphate (HMP-PP) to form thiamine monophosphate (TMP).</text>
</comment>
<comment type="catalytic activity">
    <reaction evidence="1">
        <text>2-[(2R,5Z)-2-carboxy-4-methylthiazol-5(2H)-ylidene]ethyl phosphate + 4-amino-2-methyl-5-(diphosphooxymethyl)pyrimidine + 2 H(+) = thiamine phosphate + CO2 + diphosphate</text>
        <dbReference type="Rhea" id="RHEA:47844"/>
        <dbReference type="ChEBI" id="CHEBI:15378"/>
        <dbReference type="ChEBI" id="CHEBI:16526"/>
        <dbReference type="ChEBI" id="CHEBI:33019"/>
        <dbReference type="ChEBI" id="CHEBI:37575"/>
        <dbReference type="ChEBI" id="CHEBI:57841"/>
        <dbReference type="ChEBI" id="CHEBI:62899"/>
        <dbReference type="EC" id="2.5.1.3"/>
    </reaction>
</comment>
<comment type="catalytic activity">
    <reaction evidence="1">
        <text>2-(2-carboxy-4-methylthiazol-5-yl)ethyl phosphate + 4-amino-2-methyl-5-(diphosphooxymethyl)pyrimidine + 2 H(+) = thiamine phosphate + CO2 + diphosphate</text>
        <dbReference type="Rhea" id="RHEA:47848"/>
        <dbReference type="ChEBI" id="CHEBI:15378"/>
        <dbReference type="ChEBI" id="CHEBI:16526"/>
        <dbReference type="ChEBI" id="CHEBI:33019"/>
        <dbReference type="ChEBI" id="CHEBI:37575"/>
        <dbReference type="ChEBI" id="CHEBI:57841"/>
        <dbReference type="ChEBI" id="CHEBI:62890"/>
        <dbReference type="EC" id="2.5.1.3"/>
    </reaction>
</comment>
<comment type="catalytic activity">
    <reaction evidence="1">
        <text>4-methyl-5-(2-phosphooxyethyl)-thiazole + 4-amino-2-methyl-5-(diphosphooxymethyl)pyrimidine + H(+) = thiamine phosphate + diphosphate</text>
        <dbReference type="Rhea" id="RHEA:22328"/>
        <dbReference type="ChEBI" id="CHEBI:15378"/>
        <dbReference type="ChEBI" id="CHEBI:33019"/>
        <dbReference type="ChEBI" id="CHEBI:37575"/>
        <dbReference type="ChEBI" id="CHEBI:57841"/>
        <dbReference type="ChEBI" id="CHEBI:58296"/>
        <dbReference type="EC" id="2.5.1.3"/>
    </reaction>
</comment>
<comment type="cofactor">
    <cofactor evidence="1">
        <name>Mg(2+)</name>
        <dbReference type="ChEBI" id="CHEBI:18420"/>
    </cofactor>
    <text evidence="1">Binds 1 Mg(2+) ion per subunit.</text>
</comment>
<comment type="pathway">
    <text evidence="1">Cofactor biosynthesis; thiamine diphosphate biosynthesis; thiamine phosphate from 4-amino-2-methyl-5-diphosphomethylpyrimidine and 4-methyl-5-(2-phosphoethyl)-thiazole: step 1/1.</text>
</comment>
<comment type="similarity">
    <text evidence="1">Belongs to the thiamine-phosphate synthase family.</text>
</comment>
<sequence>MFNQSYLNVYFICGTSDVPSHRTIHEVLEAALKAGITLFQFREKGESALKGNDKLVLAKELQHLCHQYDVPFIVNDDVSLAKEINADGIHVGQDDAKVKEIAQYFTDKIIGLSISDLDEYAKSDLTHVDYIGVGPIYPTPSKHDAHIPVGPEMIATFKEMNPQLPIVAIGGINTNNVAPIVEAGANGISVISAISKSENIEKTVNRFKDFFNN</sequence>
<name>THIE_STAAE</name>
<keyword id="KW-0460">Magnesium</keyword>
<keyword id="KW-0479">Metal-binding</keyword>
<keyword id="KW-0784">Thiamine biosynthesis</keyword>
<keyword id="KW-0808">Transferase</keyword>
<proteinExistence type="inferred from homology"/>
<protein>
    <recommendedName>
        <fullName evidence="1">Thiamine-phosphate synthase</fullName>
        <shortName evidence="1">TP synthase</shortName>
        <shortName evidence="1">TPS</shortName>
        <ecNumber evidence="1">2.5.1.3</ecNumber>
    </recommendedName>
    <alternativeName>
        <fullName evidence="1">Thiamine-phosphate pyrophosphorylase</fullName>
        <shortName evidence="1">TMP pyrophosphorylase</shortName>
        <shortName evidence="1">TMP-PPase</shortName>
    </alternativeName>
</protein>
<organism>
    <name type="scientific">Staphylococcus aureus (strain Newman)</name>
    <dbReference type="NCBI Taxonomy" id="426430"/>
    <lineage>
        <taxon>Bacteria</taxon>
        <taxon>Bacillati</taxon>
        <taxon>Bacillota</taxon>
        <taxon>Bacilli</taxon>
        <taxon>Bacillales</taxon>
        <taxon>Staphylococcaceae</taxon>
        <taxon>Staphylococcus</taxon>
    </lineage>
</organism>
<gene>
    <name evidence="1" type="primary">thiE</name>
    <name type="ordered locus">NWMN_1995</name>
</gene>
<accession>A6QIT5</accession>
<feature type="chain" id="PRO_1000071284" description="Thiamine-phosphate synthase">
    <location>
        <begin position="1"/>
        <end position="213"/>
    </location>
</feature>
<feature type="binding site" evidence="1">
    <location>
        <begin position="40"/>
        <end position="44"/>
    </location>
    <ligand>
        <name>4-amino-2-methyl-5-(diphosphooxymethyl)pyrimidine</name>
        <dbReference type="ChEBI" id="CHEBI:57841"/>
    </ligand>
</feature>
<feature type="binding site" evidence="1">
    <location>
        <position position="75"/>
    </location>
    <ligand>
        <name>4-amino-2-methyl-5-(diphosphooxymethyl)pyrimidine</name>
        <dbReference type="ChEBI" id="CHEBI:57841"/>
    </ligand>
</feature>
<feature type="binding site" evidence="1">
    <location>
        <position position="76"/>
    </location>
    <ligand>
        <name>Mg(2+)</name>
        <dbReference type="ChEBI" id="CHEBI:18420"/>
    </ligand>
</feature>
<feature type="binding site" evidence="1">
    <location>
        <position position="95"/>
    </location>
    <ligand>
        <name>Mg(2+)</name>
        <dbReference type="ChEBI" id="CHEBI:18420"/>
    </ligand>
</feature>
<feature type="binding site" evidence="1">
    <location>
        <position position="113"/>
    </location>
    <ligand>
        <name>4-amino-2-methyl-5-(diphosphooxymethyl)pyrimidine</name>
        <dbReference type="ChEBI" id="CHEBI:57841"/>
    </ligand>
</feature>
<feature type="binding site" evidence="1">
    <location>
        <begin position="139"/>
        <end position="141"/>
    </location>
    <ligand>
        <name>2-[(2R,5Z)-2-carboxy-4-methylthiazol-5(2H)-ylidene]ethyl phosphate</name>
        <dbReference type="ChEBI" id="CHEBI:62899"/>
    </ligand>
</feature>
<feature type="binding site" evidence="1">
    <location>
        <position position="142"/>
    </location>
    <ligand>
        <name>4-amino-2-methyl-5-(diphosphooxymethyl)pyrimidine</name>
        <dbReference type="ChEBI" id="CHEBI:57841"/>
    </ligand>
</feature>
<feature type="binding site" evidence="1">
    <location>
        <position position="171"/>
    </location>
    <ligand>
        <name>2-[(2R,5Z)-2-carboxy-4-methylthiazol-5(2H)-ylidene]ethyl phosphate</name>
        <dbReference type="ChEBI" id="CHEBI:62899"/>
    </ligand>
</feature>
<feature type="binding site" evidence="1">
    <location>
        <begin position="191"/>
        <end position="192"/>
    </location>
    <ligand>
        <name>2-[(2R,5Z)-2-carboxy-4-methylthiazol-5(2H)-ylidene]ethyl phosphate</name>
        <dbReference type="ChEBI" id="CHEBI:62899"/>
    </ligand>
</feature>
<evidence type="ECO:0000255" key="1">
    <source>
        <dbReference type="HAMAP-Rule" id="MF_00097"/>
    </source>
</evidence>
<reference key="1">
    <citation type="journal article" date="2008" name="J. Bacteriol.">
        <title>Genome sequence of Staphylococcus aureus strain Newman and comparative analysis of staphylococcal genomes: polymorphism and evolution of two major pathogenicity islands.</title>
        <authorList>
            <person name="Baba T."/>
            <person name="Bae T."/>
            <person name="Schneewind O."/>
            <person name="Takeuchi F."/>
            <person name="Hiramatsu K."/>
        </authorList>
    </citation>
    <scope>NUCLEOTIDE SEQUENCE [LARGE SCALE GENOMIC DNA]</scope>
    <source>
        <strain>Newman</strain>
    </source>
</reference>